<organism>
    <name type="scientific">Saccharomyces cerevisiae (strain ATCC 204508 / S288c)</name>
    <name type="common">Baker's yeast</name>
    <dbReference type="NCBI Taxonomy" id="559292"/>
    <lineage>
        <taxon>Eukaryota</taxon>
        <taxon>Fungi</taxon>
        <taxon>Dikarya</taxon>
        <taxon>Ascomycota</taxon>
        <taxon>Saccharomycotina</taxon>
        <taxon>Saccharomycetes</taxon>
        <taxon>Saccharomycetales</taxon>
        <taxon>Saccharomycetaceae</taxon>
        <taxon>Saccharomyces</taxon>
    </lineage>
</organism>
<keyword id="KW-0479">Metal-binding</keyword>
<keyword id="KW-1185">Reference proteome</keyword>
<keyword id="KW-0677">Repeat</keyword>
<keyword id="KW-0808">Transferase</keyword>
<keyword id="KW-0810">Translation regulation</keyword>
<keyword id="KW-0833">Ubl conjugation pathway</keyword>
<keyword id="KW-0862">Zinc</keyword>
<keyword id="KW-0863">Zinc-finger</keyword>
<reference key="1">
    <citation type="journal article" date="1997" name="Nature">
        <title>The nucleotide sequence of Saccharomyces cerevisiae chromosome XIII.</title>
        <authorList>
            <person name="Bowman S."/>
            <person name="Churcher C.M."/>
            <person name="Badcock K."/>
            <person name="Brown D."/>
            <person name="Chillingworth T."/>
            <person name="Connor R."/>
            <person name="Dedman K."/>
            <person name="Devlin K."/>
            <person name="Gentles S."/>
            <person name="Hamlin N."/>
            <person name="Hunt S."/>
            <person name="Jagels K."/>
            <person name="Lye G."/>
            <person name="Moule S."/>
            <person name="Odell C."/>
            <person name="Pearson D."/>
            <person name="Rajandream M.A."/>
            <person name="Rice P."/>
            <person name="Skelton J."/>
            <person name="Walsh S.V."/>
            <person name="Whitehead S."/>
            <person name="Barrell B.G."/>
        </authorList>
    </citation>
    <scope>NUCLEOTIDE SEQUENCE [LARGE SCALE GENOMIC DNA]</scope>
    <source>
        <strain>ATCC 204508 / S288c</strain>
    </source>
</reference>
<reference key="2">
    <citation type="journal article" date="2014" name="G3 (Bethesda)">
        <title>The reference genome sequence of Saccharomyces cerevisiae: Then and now.</title>
        <authorList>
            <person name="Engel S.R."/>
            <person name="Dietrich F.S."/>
            <person name="Fisk D.G."/>
            <person name="Binkley G."/>
            <person name="Balakrishnan R."/>
            <person name="Costanzo M.C."/>
            <person name="Dwight S.S."/>
            <person name="Hitz B.C."/>
            <person name="Karra K."/>
            <person name="Nash R.S."/>
            <person name="Weng S."/>
            <person name="Wong E.D."/>
            <person name="Lloyd P."/>
            <person name="Skrzypek M.S."/>
            <person name="Miyasato S.R."/>
            <person name="Simison M."/>
            <person name="Cherry J.M."/>
        </authorList>
    </citation>
    <scope>GENOME REANNOTATION</scope>
    <source>
        <strain>ATCC 204508 / S288c</strain>
    </source>
</reference>
<reference key="3">
    <citation type="journal article" date="2001" name="BMC Mol. Biol.">
        <title>Itt1p, a novel protein inhibiting translation termination in Saccharomyces cerevisiae.</title>
        <authorList>
            <person name="Urakov V.N."/>
            <person name="Valouev I.A."/>
            <person name="Lewitin E.I."/>
            <person name="Paushkin S.V."/>
            <person name="Kosorukov V.S."/>
            <person name="Kushnirov V.V."/>
            <person name="Smirnov V.N."/>
            <person name="Ter-Avanesyan M.D."/>
        </authorList>
    </citation>
    <scope>FUNCTION</scope>
    <scope>INTERACTION WITH SUP35 AND SUP45</scope>
</reference>
<reference key="4">
    <citation type="journal article" date="2003" name="Nature">
        <title>Global analysis of protein expression in yeast.</title>
        <authorList>
            <person name="Ghaemmaghami S."/>
            <person name="Huh W.-K."/>
            <person name="Bower K."/>
            <person name="Howson R.W."/>
            <person name="Belle A."/>
            <person name="Dephoure N."/>
            <person name="O'Shea E.K."/>
            <person name="Weissman J.S."/>
        </authorList>
    </citation>
    <scope>LEVEL OF PROTEIN EXPRESSION [LARGE SCALE ANALYSIS]</scope>
</reference>
<reference key="5">
    <citation type="journal article" date="2023" name="Mol. Cell">
        <title>K6-linked ubiquitylation marks formaldehyde-induced RNA-protein crosslinks for resolution.</title>
        <authorList>
            <person name="Suryo Rahmanto A."/>
            <person name="Blum C.J."/>
            <person name="Scalera C."/>
            <person name="Heidelberger J.B."/>
            <person name="Mesitov M."/>
            <person name="Horn-Ghetko D."/>
            <person name="Graef J.F."/>
            <person name="Mikicic I."/>
            <person name="Hobrecht R."/>
            <person name="Orekhova A."/>
            <person name="Ostermaier M."/>
            <person name="Ebersberger S."/>
            <person name="Moeckel M.M."/>
            <person name="Krapoth N."/>
            <person name="Da Silva Fernandes N."/>
            <person name="Mizi A."/>
            <person name="Zhu Y."/>
            <person name="Chen J.X."/>
            <person name="Choudhary C."/>
            <person name="Papantonis A."/>
            <person name="Ulrich H.D."/>
            <person name="Schulman B.A."/>
            <person name="Koenig J."/>
            <person name="Beli P."/>
        </authorList>
    </citation>
    <scope>FUNCTION</scope>
    <scope>PATHWAY</scope>
</reference>
<accession>Q04638</accession>
<accession>D6VZA5</accession>
<proteinExistence type="evidence at protein level"/>
<comment type="function">
    <text evidence="4 6">E3 ubiquitin-protein ligase involved in translation quality control (PubMed:11570975, PubMed:37951215). Involved in the rescue of stalled ribosomes by promoting ubiquitination and degradation of proteins on stalled ribosomes (PubMed:37951215). Specifically required to resolve RNA-protein cross-links caused by reactive aldehydes, which trigger translation stress by stalling ribosomes: acts by catalying 'Lys-6'-linked ubiquitination of RNA-protein cross-links, leading to their degradation (PubMed:37951215). Interacts with the translation termination factors eRF1 (SUP45) and eRF3 (SUP35); overexpression decreases the efficiency of translation termination (PubMed:11570975).</text>
</comment>
<comment type="catalytic activity">
    <reaction evidence="2">
        <text>[E2 ubiquitin-conjugating enzyme]-S-ubiquitinyl-L-cysteine + [acceptor protein]-L-lysine = [E2 ubiquitin-conjugating enzyme]-L-cysteine + [acceptor protein]-N(6)-ubiquitinyl-L-lysine.</text>
        <dbReference type="EC" id="2.3.2.31"/>
    </reaction>
</comment>
<comment type="pathway">
    <text evidence="6">Protein modification; protein ubiquitination.</text>
</comment>
<comment type="subunit">
    <text evidence="4">Interacts with translation release factors eRF1 (SUP45) and eRF3 (SUP35) in vitro.</text>
</comment>
<comment type="interaction">
    <interactant intactId="EBI-27858">
        <id>Q04638</id>
    </interactant>
    <interactant intactId="EBI-6540">
        <id>P05453</id>
        <label>SUP35</label>
    </interactant>
    <organismsDiffer>false</organismsDiffer>
    <experiments>3</experiments>
</comment>
<comment type="domain">
    <text evidence="1">Members of the RBR family are atypical E3 ligases. They interact with the E2 conjugating enzyme UBE2L3 and function like HECT-type E3 enzymes: they bind E2s via the first RING domain, but require an obligate trans-thiolation step during the ubiquitin transfer, requiring a conserved cysteine residue in the second RING domain.</text>
</comment>
<comment type="miscellaneous">
    <text evidence="5">Present with 846 molecules/cell in log phase SD medium.</text>
</comment>
<comment type="similarity">
    <text evidence="8">Belongs to the RBR family. RNF14 subfamily.</text>
</comment>
<comment type="caution">
    <text evidence="8">Lacks the His residue in the RING-type domain 2 that is one of the conserved features of the family.</text>
</comment>
<evidence type="ECO:0000250" key="1">
    <source>
        <dbReference type="UniProtKB" id="O60260"/>
    </source>
</evidence>
<evidence type="ECO:0000250" key="2">
    <source>
        <dbReference type="UniProtKB" id="Q9UBS8"/>
    </source>
</evidence>
<evidence type="ECO:0000255" key="3">
    <source>
        <dbReference type="PROSITE-ProRule" id="PRU01221"/>
    </source>
</evidence>
<evidence type="ECO:0000269" key="4">
    <source>
    </source>
</evidence>
<evidence type="ECO:0000269" key="5">
    <source>
    </source>
</evidence>
<evidence type="ECO:0000269" key="6">
    <source>
    </source>
</evidence>
<evidence type="ECO:0000303" key="7">
    <source>
    </source>
</evidence>
<evidence type="ECO:0000305" key="8"/>
<evidence type="ECO:0000312" key="9">
    <source>
        <dbReference type="SGD" id="S000004533"/>
    </source>
</evidence>
<name>ITT1_YEAST</name>
<dbReference type="EC" id="2.3.2.31" evidence="2"/>
<dbReference type="EMBL" id="Z38114">
    <property type="protein sequence ID" value="CAA86252.1"/>
    <property type="molecule type" value="Genomic_DNA"/>
</dbReference>
<dbReference type="EMBL" id="BK006946">
    <property type="protein sequence ID" value="DAA09829.1"/>
    <property type="molecule type" value="Genomic_DNA"/>
</dbReference>
<dbReference type="PIR" id="S48329">
    <property type="entry name" value="S48329"/>
</dbReference>
<dbReference type="RefSeq" id="NP_013643.1">
    <property type="nucleotide sequence ID" value="NM_001182427.1"/>
</dbReference>
<dbReference type="BioGRID" id="35098">
    <property type="interactions" value="85"/>
</dbReference>
<dbReference type="DIP" id="DIP-1952N"/>
<dbReference type="FunCoup" id="Q04638">
    <property type="interactions" value="221"/>
</dbReference>
<dbReference type="IntAct" id="Q04638">
    <property type="interactions" value="7"/>
</dbReference>
<dbReference type="MINT" id="Q04638"/>
<dbReference type="STRING" id="4932.YML068W"/>
<dbReference type="iPTMnet" id="Q04638"/>
<dbReference type="PaxDb" id="4932-YML068W"/>
<dbReference type="PeptideAtlas" id="Q04638"/>
<dbReference type="EnsemblFungi" id="YML068W_mRNA">
    <property type="protein sequence ID" value="YML068W"/>
    <property type="gene ID" value="YML068W"/>
</dbReference>
<dbReference type="GeneID" id="854934"/>
<dbReference type="KEGG" id="sce:YML068W"/>
<dbReference type="AGR" id="SGD:S000004533"/>
<dbReference type="SGD" id="S000004533">
    <property type="gene designation" value="ITT1"/>
</dbReference>
<dbReference type="VEuPathDB" id="FungiDB:YML068W"/>
<dbReference type="eggNOG" id="KOG1814">
    <property type="taxonomic scope" value="Eukaryota"/>
</dbReference>
<dbReference type="HOGENOM" id="CLU_021364_2_2_1"/>
<dbReference type="InParanoid" id="Q04638"/>
<dbReference type="OMA" id="SNLQRCP"/>
<dbReference type="OrthoDB" id="1431934at2759"/>
<dbReference type="BioCyc" id="YEAST:G3O-32663-MONOMER"/>
<dbReference type="Reactome" id="R-SCE-983168">
    <property type="pathway name" value="Antigen processing: Ubiquitination &amp; Proteasome degradation"/>
</dbReference>
<dbReference type="UniPathway" id="UPA00143"/>
<dbReference type="BioGRID-ORCS" id="854934">
    <property type="hits" value="0 hits in 10 CRISPR screens"/>
</dbReference>
<dbReference type="PRO" id="PR:Q04638"/>
<dbReference type="Proteomes" id="UP000002311">
    <property type="component" value="Chromosome XIII"/>
</dbReference>
<dbReference type="RNAct" id="Q04638">
    <property type="molecule type" value="protein"/>
</dbReference>
<dbReference type="GO" id="GO:0005737">
    <property type="term" value="C:cytoplasm"/>
    <property type="evidence" value="ECO:0000318"/>
    <property type="project" value="GO_Central"/>
</dbReference>
<dbReference type="GO" id="GO:0000151">
    <property type="term" value="C:ubiquitin ligase complex"/>
    <property type="evidence" value="ECO:0000318"/>
    <property type="project" value="GO_Central"/>
</dbReference>
<dbReference type="GO" id="GO:0031624">
    <property type="term" value="F:ubiquitin conjugating enzyme binding"/>
    <property type="evidence" value="ECO:0000318"/>
    <property type="project" value="GO_Central"/>
</dbReference>
<dbReference type="GO" id="GO:0061630">
    <property type="term" value="F:ubiquitin protein ligase activity"/>
    <property type="evidence" value="ECO:0000318"/>
    <property type="project" value="GO_Central"/>
</dbReference>
<dbReference type="GO" id="GO:0008270">
    <property type="term" value="F:zinc ion binding"/>
    <property type="evidence" value="ECO:0007669"/>
    <property type="project" value="UniProtKB-KW"/>
</dbReference>
<dbReference type="GO" id="GO:0085020">
    <property type="term" value="P:protein K6-linked ubiquitination"/>
    <property type="evidence" value="ECO:0000315"/>
    <property type="project" value="UniProtKB"/>
</dbReference>
<dbReference type="GO" id="GO:0160127">
    <property type="term" value="P:protein-RNA covalent cross-linking repair"/>
    <property type="evidence" value="ECO:0000314"/>
    <property type="project" value="UniProtKB"/>
</dbReference>
<dbReference type="GO" id="GO:0006449">
    <property type="term" value="P:regulation of translational termination"/>
    <property type="evidence" value="ECO:0000315"/>
    <property type="project" value="SGD"/>
</dbReference>
<dbReference type="GO" id="GO:0072344">
    <property type="term" value="P:rescue of stalled ribosome"/>
    <property type="evidence" value="ECO:0000315"/>
    <property type="project" value="UniProtKB"/>
</dbReference>
<dbReference type="GO" id="GO:0006511">
    <property type="term" value="P:ubiquitin-dependent protein catabolic process"/>
    <property type="evidence" value="ECO:0000318"/>
    <property type="project" value="GO_Central"/>
</dbReference>
<dbReference type="CDD" id="cd20354">
    <property type="entry name" value="Rcat_RBR_RNF14"/>
    <property type="match status" value="1"/>
</dbReference>
<dbReference type="CDD" id="cd23783">
    <property type="entry name" value="RWD_ScITT1-like"/>
    <property type="match status" value="1"/>
</dbReference>
<dbReference type="Gene3D" id="1.20.120.1750">
    <property type="match status" value="1"/>
</dbReference>
<dbReference type="Gene3D" id="3.30.40.10">
    <property type="entry name" value="Zinc/RING finger domain, C3HC4 (zinc finger)"/>
    <property type="match status" value="1"/>
</dbReference>
<dbReference type="InterPro" id="IPR031127">
    <property type="entry name" value="E3_UB_ligase_RBR"/>
</dbReference>
<dbReference type="InterPro" id="IPR002867">
    <property type="entry name" value="IBR_dom"/>
</dbReference>
<dbReference type="InterPro" id="IPR047548">
    <property type="entry name" value="Rcat_RBR_RNF14"/>
</dbReference>
<dbReference type="InterPro" id="IPR044066">
    <property type="entry name" value="TRIAD_supradom"/>
</dbReference>
<dbReference type="InterPro" id="IPR001841">
    <property type="entry name" value="Znf_RING"/>
</dbReference>
<dbReference type="InterPro" id="IPR013083">
    <property type="entry name" value="Znf_RING/FYVE/PHD"/>
</dbReference>
<dbReference type="PANTHER" id="PTHR11685">
    <property type="entry name" value="RBR FAMILY RING FINGER AND IBR DOMAIN-CONTAINING"/>
    <property type="match status" value="1"/>
</dbReference>
<dbReference type="Pfam" id="PF01485">
    <property type="entry name" value="IBR"/>
    <property type="match status" value="1"/>
</dbReference>
<dbReference type="SMART" id="SM00647">
    <property type="entry name" value="IBR"/>
    <property type="match status" value="2"/>
</dbReference>
<dbReference type="SMART" id="SM00184">
    <property type="entry name" value="RING"/>
    <property type="match status" value="2"/>
</dbReference>
<dbReference type="SUPFAM" id="SSF57850">
    <property type="entry name" value="RING/U-box"/>
    <property type="match status" value="2"/>
</dbReference>
<dbReference type="PROSITE" id="PS51873">
    <property type="entry name" value="TRIAD"/>
    <property type="match status" value="1"/>
</dbReference>
<dbReference type="PROSITE" id="PS50089">
    <property type="entry name" value="ZF_RING_2"/>
    <property type="match status" value="1"/>
</dbReference>
<gene>
    <name evidence="7 9" type="primary">ITT1</name>
    <name type="ordered locus">YML068W</name>
</gene>
<feature type="chain" id="PRO_0000056340" description="E3 ubiquitin-protein ligase ITT1">
    <location>
        <begin position="1"/>
        <end position="464"/>
    </location>
</feature>
<feature type="zinc finger region" description="RING-type 1" evidence="3">
    <location>
        <begin position="180"/>
        <end position="236"/>
    </location>
</feature>
<feature type="zinc finger region" description="IBR-type" evidence="3">
    <location>
        <begin position="267"/>
        <end position="338"/>
    </location>
</feature>
<feature type="zinc finger region" description="RING-type 2; atypical" evidence="3">
    <location>
        <begin position="402"/>
        <end position="431"/>
    </location>
</feature>
<feature type="region of interest" description="TRIAD supradomain" evidence="3">
    <location>
        <begin position="176"/>
        <end position="455"/>
    </location>
</feature>
<feature type="active site" evidence="3">
    <location>
        <position position="415"/>
    </location>
</feature>
<feature type="binding site" evidence="3">
    <location>
        <position position="180"/>
    </location>
    <ligand>
        <name>Zn(2+)</name>
        <dbReference type="ChEBI" id="CHEBI:29105"/>
        <label>1</label>
    </ligand>
</feature>
<feature type="binding site" evidence="3">
    <location>
        <position position="183"/>
    </location>
    <ligand>
        <name>Zn(2+)</name>
        <dbReference type="ChEBI" id="CHEBI:29105"/>
        <label>1</label>
    </ligand>
</feature>
<feature type="binding site" evidence="3">
    <location>
        <position position="207"/>
    </location>
    <ligand>
        <name>Zn(2+)</name>
        <dbReference type="ChEBI" id="CHEBI:29105"/>
        <label>1</label>
    </ligand>
</feature>
<feature type="binding site" evidence="3">
    <location>
        <position position="210"/>
    </location>
    <ligand>
        <name>Zn(2+)</name>
        <dbReference type="ChEBI" id="CHEBI:29105"/>
        <label>1</label>
    </ligand>
</feature>
<feature type="binding site" evidence="3">
    <location>
        <position position="290"/>
    </location>
    <ligand>
        <name>Zn(2+)</name>
        <dbReference type="ChEBI" id="CHEBI:29105"/>
        <label>2</label>
    </ligand>
</feature>
<feature type="binding site" evidence="3">
    <location>
        <position position="300"/>
    </location>
    <ligand>
        <name>Zn(2+)</name>
        <dbReference type="ChEBI" id="CHEBI:29105"/>
        <label>2</label>
    </ligand>
</feature>
<feature type="binding site" evidence="3">
    <location>
        <position position="316"/>
    </location>
    <ligand>
        <name>Zn(2+)</name>
        <dbReference type="ChEBI" id="CHEBI:29105"/>
        <label>2</label>
    </ligand>
</feature>
<feature type="binding site" evidence="3">
    <location>
        <position position="319"/>
    </location>
    <ligand>
        <name>Zn(2+)</name>
        <dbReference type="ChEBI" id="CHEBI:29105"/>
        <label>2</label>
    </ligand>
</feature>
<feature type="binding site" evidence="3">
    <location>
        <position position="402"/>
    </location>
    <ligand>
        <name>Zn(2+)</name>
        <dbReference type="ChEBI" id="CHEBI:29105"/>
        <label>3</label>
    </ligand>
</feature>
<feature type="binding site" evidence="3">
    <location>
        <position position="405"/>
    </location>
    <ligand>
        <name>Zn(2+)</name>
        <dbReference type="ChEBI" id="CHEBI:29105"/>
        <label>3</label>
    </ligand>
</feature>
<feature type="binding site" evidence="3">
    <location>
        <position position="420"/>
    </location>
    <ligand>
        <name>Zn(2+)</name>
        <dbReference type="ChEBI" id="CHEBI:29105"/>
        <label>3</label>
    </ligand>
</feature>
<feature type="binding site" evidence="3">
    <location>
        <position position="423"/>
    </location>
    <ligand>
        <name>Zn(2+)</name>
        <dbReference type="ChEBI" id="CHEBI:29105"/>
        <label>3</label>
    </ligand>
</feature>
<feature type="binding site" evidence="3">
    <location>
        <position position="428"/>
    </location>
    <ligand>
        <name>Zn(2+)</name>
        <dbReference type="ChEBI" id="CHEBI:29105"/>
        <label>4</label>
    </ligand>
</feature>
<feature type="binding site" evidence="3">
    <location>
        <position position="431"/>
    </location>
    <ligand>
        <name>Zn(2+)</name>
        <dbReference type="ChEBI" id="CHEBI:29105"/>
        <label>4</label>
    </ligand>
</feature>
<feature type="binding site" evidence="3">
    <location>
        <position position="443"/>
    </location>
    <ligand>
        <name>Zn(2+)</name>
        <dbReference type="ChEBI" id="CHEBI:29105"/>
        <label>4</label>
    </ligand>
</feature>
<feature type="binding site" evidence="3">
    <location>
        <position position="451"/>
    </location>
    <ligand>
        <name>Zn(2+)</name>
        <dbReference type="ChEBI" id="CHEBI:29105"/>
        <label>4</label>
    </ligand>
</feature>
<sequence length="464" mass="54096">MALTQFENDLEILRDMYPELEMKSVKVEEEGEFPQRINGKLLFKISLLADVNIEFGEQHMLLSNLSNECVEFTIYSCHYPDIRRCVVMDIKSLWISTDEKKMLIDKALRLVEETVDMSIEFADSFTSILILIFGFLIDDTAILLFPNGIRKCLTQDQYDLFKQISEEATLQKVSRSNYHCCICMEMEKGVRMIKLPCENANVEHYLCRGCAKSYFTAMIQENRISSVRCPQCEYKELKLEDFKSYKKMLKALFTPLIPVSFLKEVIDTELCERYEKMFYNQAATRLSKYCPYACVTCRRCDSWCTKEDLDDAMIQCQKCHFVFCFDCLHAWHGYNNKCGKKVSLSTDIIEEYLDDTVTSYERKRKLEAKYGRRVLELEVNDYLAEKMLDLAIKKEGSNLQRCPKCKVVVERSEGCNKMKCEVCGTLFCFICGVLLYPEDPYEHFREAYSGCYGRLFEGMPGTET</sequence>
<protein>
    <recommendedName>
        <fullName evidence="8">E3 ubiquitin-protein ligase ITT1</fullName>
        <ecNumber evidence="2">2.3.2.31</ecNumber>
    </recommendedName>
</protein>